<feature type="chain" id="PRO_1000123352" description="Large ribosomal subunit protein bL19">
    <location>
        <begin position="1"/>
        <end position="133"/>
    </location>
</feature>
<feature type="region of interest" description="Disordered" evidence="2">
    <location>
        <begin position="114"/>
        <end position="133"/>
    </location>
</feature>
<feature type="compositionally biased region" description="Basic and acidic residues" evidence="2">
    <location>
        <begin position="123"/>
        <end position="133"/>
    </location>
</feature>
<organism>
    <name type="scientific">Phenylobacterium zucineum (strain HLK1)</name>
    <dbReference type="NCBI Taxonomy" id="450851"/>
    <lineage>
        <taxon>Bacteria</taxon>
        <taxon>Pseudomonadati</taxon>
        <taxon>Pseudomonadota</taxon>
        <taxon>Alphaproteobacteria</taxon>
        <taxon>Caulobacterales</taxon>
        <taxon>Caulobacteraceae</taxon>
        <taxon>Phenylobacterium</taxon>
    </lineage>
</organism>
<gene>
    <name evidence="1" type="primary">rplS</name>
    <name type="ordered locus">PHZ_c0111</name>
</gene>
<accession>B4RCC6</accession>
<proteinExistence type="inferred from homology"/>
<name>RL19_PHEZH</name>
<evidence type="ECO:0000255" key="1">
    <source>
        <dbReference type="HAMAP-Rule" id="MF_00402"/>
    </source>
</evidence>
<evidence type="ECO:0000256" key="2">
    <source>
        <dbReference type="SAM" id="MobiDB-lite"/>
    </source>
</evidence>
<evidence type="ECO:0000305" key="3"/>
<dbReference type="EMBL" id="CP000747">
    <property type="protein sequence ID" value="ACG76525.1"/>
    <property type="molecule type" value="Genomic_DNA"/>
</dbReference>
<dbReference type="RefSeq" id="WP_012520673.1">
    <property type="nucleotide sequence ID" value="NC_011144.1"/>
</dbReference>
<dbReference type="SMR" id="B4RCC6"/>
<dbReference type="STRING" id="450851.PHZ_c0111"/>
<dbReference type="KEGG" id="pzu:PHZ_c0111"/>
<dbReference type="eggNOG" id="COG0335">
    <property type="taxonomic scope" value="Bacteria"/>
</dbReference>
<dbReference type="HOGENOM" id="CLU_103507_2_1_5"/>
<dbReference type="OrthoDB" id="9803541at2"/>
<dbReference type="Proteomes" id="UP000001868">
    <property type="component" value="Chromosome"/>
</dbReference>
<dbReference type="GO" id="GO:0022625">
    <property type="term" value="C:cytosolic large ribosomal subunit"/>
    <property type="evidence" value="ECO:0007669"/>
    <property type="project" value="TreeGrafter"/>
</dbReference>
<dbReference type="GO" id="GO:0003735">
    <property type="term" value="F:structural constituent of ribosome"/>
    <property type="evidence" value="ECO:0007669"/>
    <property type="project" value="InterPro"/>
</dbReference>
<dbReference type="GO" id="GO:0006412">
    <property type="term" value="P:translation"/>
    <property type="evidence" value="ECO:0007669"/>
    <property type="project" value="UniProtKB-UniRule"/>
</dbReference>
<dbReference type="FunFam" id="2.30.30.790:FF:000001">
    <property type="entry name" value="50S ribosomal protein L19"/>
    <property type="match status" value="1"/>
</dbReference>
<dbReference type="Gene3D" id="2.30.30.790">
    <property type="match status" value="1"/>
</dbReference>
<dbReference type="HAMAP" id="MF_00402">
    <property type="entry name" value="Ribosomal_bL19"/>
    <property type="match status" value="1"/>
</dbReference>
<dbReference type="InterPro" id="IPR001857">
    <property type="entry name" value="Ribosomal_bL19"/>
</dbReference>
<dbReference type="InterPro" id="IPR018257">
    <property type="entry name" value="Ribosomal_bL19_CS"/>
</dbReference>
<dbReference type="InterPro" id="IPR038657">
    <property type="entry name" value="Ribosomal_bL19_sf"/>
</dbReference>
<dbReference type="InterPro" id="IPR008991">
    <property type="entry name" value="Translation_prot_SH3-like_sf"/>
</dbReference>
<dbReference type="NCBIfam" id="TIGR01024">
    <property type="entry name" value="rplS_bact"/>
    <property type="match status" value="1"/>
</dbReference>
<dbReference type="PANTHER" id="PTHR15680:SF9">
    <property type="entry name" value="LARGE RIBOSOMAL SUBUNIT PROTEIN BL19M"/>
    <property type="match status" value="1"/>
</dbReference>
<dbReference type="PANTHER" id="PTHR15680">
    <property type="entry name" value="RIBOSOMAL PROTEIN L19"/>
    <property type="match status" value="1"/>
</dbReference>
<dbReference type="Pfam" id="PF01245">
    <property type="entry name" value="Ribosomal_L19"/>
    <property type="match status" value="1"/>
</dbReference>
<dbReference type="PIRSF" id="PIRSF002191">
    <property type="entry name" value="Ribosomal_L19"/>
    <property type="match status" value="1"/>
</dbReference>
<dbReference type="PRINTS" id="PR00061">
    <property type="entry name" value="RIBOSOMALL19"/>
</dbReference>
<dbReference type="SUPFAM" id="SSF50104">
    <property type="entry name" value="Translation proteins SH3-like domain"/>
    <property type="match status" value="1"/>
</dbReference>
<dbReference type="PROSITE" id="PS01015">
    <property type="entry name" value="RIBOSOMAL_L19"/>
    <property type="match status" value="1"/>
</dbReference>
<protein>
    <recommendedName>
        <fullName evidence="1">Large ribosomal subunit protein bL19</fullName>
    </recommendedName>
    <alternativeName>
        <fullName evidence="3">50S ribosomal protein L19</fullName>
    </alternativeName>
</protein>
<reference key="1">
    <citation type="journal article" date="2008" name="BMC Genomics">
        <title>Complete genome of Phenylobacterium zucineum - a novel facultative intracellular bacterium isolated from human erythroleukemia cell line K562.</title>
        <authorList>
            <person name="Luo Y."/>
            <person name="Xu X."/>
            <person name="Ding Z."/>
            <person name="Liu Z."/>
            <person name="Zhang B."/>
            <person name="Yan Z."/>
            <person name="Sun J."/>
            <person name="Hu S."/>
            <person name="Hu X."/>
        </authorList>
    </citation>
    <scope>NUCLEOTIDE SEQUENCE [LARGE SCALE GENOMIC DNA]</scope>
    <source>
        <strain>HLK1</strain>
    </source>
</reference>
<comment type="function">
    <text evidence="1">This protein is located at the 30S-50S ribosomal subunit interface and may play a role in the structure and function of the aminoacyl-tRNA binding site.</text>
</comment>
<comment type="similarity">
    <text evidence="1">Belongs to the bacterial ribosomal protein bL19 family.</text>
</comment>
<keyword id="KW-1185">Reference proteome</keyword>
<keyword id="KW-0687">Ribonucleoprotein</keyword>
<keyword id="KW-0689">Ribosomal protein</keyword>
<sequence length="133" mass="15274">MNVIEQLRKEEADRLLAQRKVPEFRPGDTVRVNVRIKEGDRERVQAYEGVCIARAGQGVDENFTVRKISFGEGVERVFPILSPMIESIEVKRRGVVRRAKLYYLRDRRGKSARIAERQMTAASKEEPAEKSEA</sequence>